<proteinExistence type="inferred from homology"/>
<evidence type="ECO:0000255" key="1">
    <source>
        <dbReference type="HAMAP-Rule" id="MF_01318"/>
    </source>
</evidence>
<evidence type="ECO:0000305" key="2"/>
<comment type="function">
    <text evidence="1">Binds directly to 23S rRNA. The L1 stalk is quite mobile in the ribosome, and is involved in E site tRNA release.</text>
</comment>
<comment type="function">
    <text evidence="1">Protein L1 is also a translational repressor protein, it controls the translation of the L11 operon by binding to its mRNA.</text>
</comment>
<comment type="subunit">
    <text evidence="1">Part of the 50S ribosomal subunit.</text>
</comment>
<comment type="similarity">
    <text evidence="1">Belongs to the universal ribosomal protein uL1 family.</text>
</comment>
<accession>A5IJW6</accession>
<protein>
    <recommendedName>
        <fullName evidence="1">Large ribosomal subunit protein uL1</fullName>
    </recommendedName>
    <alternativeName>
        <fullName evidence="2">50S ribosomal protein L1</fullName>
    </alternativeName>
</protein>
<name>RL1_THEP1</name>
<dbReference type="EMBL" id="CP000702">
    <property type="protein sequence ID" value="ABQ46489.1"/>
    <property type="molecule type" value="Genomic_DNA"/>
</dbReference>
<dbReference type="RefSeq" id="WP_011943107.1">
    <property type="nucleotide sequence ID" value="NC_009486.1"/>
</dbReference>
<dbReference type="SMR" id="A5IJW6"/>
<dbReference type="STRING" id="390874.Tpet_0465"/>
<dbReference type="KEGG" id="tpt:Tpet_0465"/>
<dbReference type="eggNOG" id="COG0081">
    <property type="taxonomic scope" value="Bacteria"/>
</dbReference>
<dbReference type="HOGENOM" id="CLU_062853_0_0_0"/>
<dbReference type="Proteomes" id="UP000006558">
    <property type="component" value="Chromosome"/>
</dbReference>
<dbReference type="GO" id="GO:0015934">
    <property type="term" value="C:large ribosomal subunit"/>
    <property type="evidence" value="ECO:0007669"/>
    <property type="project" value="InterPro"/>
</dbReference>
<dbReference type="GO" id="GO:0019843">
    <property type="term" value="F:rRNA binding"/>
    <property type="evidence" value="ECO:0007669"/>
    <property type="project" value="UniProtKB-UniRule"/>
</dbReference>
<dbReference type="GO" id="GO:0003735">
    <property type="term" value="F:structural constituent of ribosome"/>
    <property type="evidence" value="ECO:0007669"/>
    <property type="project" value="InterPro"/>
</dbReference>
<dbReference type="GO" id="GO:0000049">
    <property type="term" value="F:tRNA binding"/>
    <property type="evidence" value="ECO:0007669"/>
    <property type="project" value="UniProtKB-KW"/>
</dbReference>
<dbReference type="GO" id="GO:0006417">
    <property type="term" value="P:regulation of translation"/>
    <property type="evidence" value="ECO:0007669"/>
    <property type="project" value="UniProtKB-KW"/>
</dbReference>
<dbReference type="GO" id="GO:0006412">
    <property type="term" value="P:translation"/>
    <property type="evidence" value="ECO:0007669"/>
    <property type="project" value="UniProtKB-UniRule"/>
</dbReference>
<dbReference type="CDD" id="cd00403">
    <property type="entry name" value="Ribosomal_L1"/>
    <property type="match status" value="1"/>
</dbReference>
<dbReference type="FunFam" id="3.40.50.790:FF:000001">
    <property type="entry name" value="50S ribosomal protein L1"/>
    <property type="match status" value="1"/>
</dbReference>
<dbReference type="Gene3D" id="3.30.190.20">
    <property type="match status" value="1"/>
</dbReference>
<dbReference type="Gene3D" id="3.40.50.790">
    <property type="match status" value="1"/>
</dbReference>
<dbReference type="HAMAP" id="MF_01318_B">
    <property type="entry name" value="Ribosomal_uL1_B"/>
    <property type="match status" value="1"/>
</dbReference>
<dbReference type="InterPro" id="IPR005878">
    <property type="entry name" value="Ribosom_uL1_bac-type"/>
</dbReference>
<dbReference type="InterPro" id="IPR002143">
    <property type="entry name" value="Ribosomal_uL1"/>
</dbReference>
<dbReference type="InterPro" id="IPR023674">
    <property type="entry name" value="Ribosomal_uL1-like"/>
</dbReference>
<dbReference type="InterPro" id="IPR028364">
    <property type="entry name" value="Ribosomal_uL1/biogenesis"/>
</dbReference>
<dbReference type="InterPro" id="IPR016095">
    <property type="entry name" value="Ribosomal_uL1_3-a/b-sand"/>
</dbReference>
<dbReference type="InterPro" id="IPR023673">
    <property type="entry name" value="Ribosomal_uL1_CS"/>
</dbReference>
<dbReference type="NCBIfam" id="TIGR01169">
    <property type="entry name" value="rplA_bact"/>
    <property type="match status" value="1"/>
</dbReference>
<dbReference type="PANTHER" id="PTHR36427">
    <property type="entry name" value="54S RIBOSOMAL PROTEIN L1, MITOCHONDRIAL"/>
    <property type="match status" value="1"/>
</dbReference>
<dbReference type="PANTHER" id="PTHR36427:SF3">
    <property type="entry name" value="LARGE RIBOSOMAL SUBUNIT PROTEIN UL1M"/>
    <property type="match status" value="1"/>
</dbReference>
<dbReference type="Pfam" id="PF00687">
    <property type="entry name" value="Ribosomal_L1"/>
    <property type="match status" value="1"/>
</dbReference>
<dbReference type="PIRSF" id="PIRSF002155">
    <property type="entry name" value="Ribosomal_L1"/>
    <property type="match status" value="1"/>
</dbReference>
<dbReference type="SUPFAM" id="SSF56808">
    <property type="entry name" value="Ribosomal protein L1"/>
    <property type="match status" value="1"/>
</dbReference>
<dbReference type="PROSITE" id="PS01199">
    <property type="entry name" value="RIBOSOMAL_L1"/>
    <property type="match status" value="1"/>
</dbReference>
<gene>
    <name evidence="1" type="primary">rplA</name>
    <name type="ordered locus">Tpet_0465</name>
</gene>
<sequence>MPKHSKRYLEARKFVDRTKYYDLDEAIELVKKTATAKFDETIELHIQTGIDYRKPEQHIRGTVVLPHGTGKEVRVLVFAKGEAAKEALEAGADYVGAEDLVEKIEKEGFLDFDVAIATPDMMRVIGRLGKILGPRGLMPSPKSGTVTQEVAEAVKEFKKGRIEVRTDKTGNIHIPVGKRSFDNEKLKENIISAVRQIMQMKPAGVKGQFIKKAVLSSTMGPGIKLNLQSLLKE</sequence>
<organism>
    <name type="scientific">Thermotoga petrophila (strain ATCC BAA-488 / DSM 13995 / JCM 10881 / RKU-1)</name>
    <dbReference type="NCBI Taxonomy" id="390874"/>
    <lineage>
        <taxon>Bacteria</taxon>
        <taxon>Thermotogati</taxon>
        <taxon>Thermotogota</taxon>
        <taxon>Thermotogae</taxon>
        <taxon>Thermotogales</taxon>
        <taxon>Thermotogaceae</taxon>
        <taxon>Thermotoga</taxon>
    </lineage>
</organism>
<feature type="chain" id="PRO_1000051927" description="Large ribosomal subunit protein uL1">
    <location>
        <begin position="1"/>
        <end position="233"/>
    </location>
</feature>
<keyword id="KW-0678">Repressor</keyword>
<keyword id="KW-0687">Ribonucleoprotein</keyword>
<keyword id="KW-0689">Ribosomal protein</keyword>
<keyword id="KW-0694">RNA-binding</keyword>
<keyword id="KW-0699">rRNA-binding</keyword>
<keyword id="KW-0810">Translation regulation</keyword>
<keyword id="KW-0820">tRNA-binding</keyword>
<reference key="1">
    <citation type="submission" date="2007-05" db="EMBL/GenBank/DDBJ databases">
        <title>Complete sequence of Thermotoga petrophila RKU-1.</title>
        <authorList>
            <consortium name="US DOE Joint Genome Institute"/>
            <person name="Copeland A."/>
            <person name="Lucas S."/>
            <person name="Lapidus A."/>
            <person name="Barry K."/>
            <person name="Glavina del Rio T."/>
            <person name="Dalin E."/>
            <person name="Tice H."/>
            <person name="Pitluck S."/>
            <person name="Sims D."/>
            <person name="Brettin T."/>
            <person name="Bruce D."/>
            <person name="Detter J.C."/>
            <person name="Han C."/>
            <person name="Tapia R."/>
            <person name="Schmutz J."/>
            <person name="Larimer F."/>
            <person name="Land M."/>
            <person name="Hauser L."/>
            <person name="Kyrpides N."/>
            <person name="Mikhailova N."/>
            <person name="Nelson K."/>
            <person name="Gogarten J.P."/>
            <person name="Noll K."/>
            <person name="Richardson P."/>
        </authorList>
    </citation>
    <scope>NUCLEOTIDE SEQUENCE [LARGE SCALE GENOMIC DNA]</scope>
    <source>
        <strain>ATCC BAA-488 / DSM 13995 / JCM 10881 / RKU-1</strain>
    </source>
</reference>